<name>GLYA1_CUPPJ</name>
<proteinExistence type="inferred from homology"/>
<organism>
    <name type="scientific">Cupriavidus pinatubonensis (strain JMP 134 / LMG 1197)</name>
    <name type="common">Cupriavidus necator (strain JMP 134)</name>
    <dbReference type="NCBI Taxonomy" id="264198"/>
    <lineage>
        <taxon>Bacteria</taxon>
        <taxon>Pseudomonadati</taxon>
        <taxon>Pseudomonadota</taxon>
        <taxon>Betaproteobacteria</taxon>
        <taxon>Burkholderiales</taxon>
        <taxon>Burkholderiaceae</taxon>
        <taxon>Cupriavidus</taxon>
    </lineage>
</organism>
<accession>Q474L3</accession>
<protein>
    <recommendedName>
        <fullName evidence="1">Serine hydroxymethyltransferase 1</fullName>
        <shortName evidence="1">SHMT 1</shortName>
        <shortName evidence="1">Serine methylase 1</shortName>
        <ecNumber evidence="1">2.1.2.1</ecNumber>
    </recommendedName>
</protein>
<reference key="1">
    <citation type="journal article" date="2010" name="PLoS ONE">
        <title>The complete multipartite genome sequence of Cupriavidus necator JMP134, a versatile pollutant degrader.</title>
        <authorList>
            <person name="Lykidis A."/>
            <person name="Perez-Pantoja D."/>
            <person name="Ledger T."/>
            <person name="Mavromatis K."/>
            <person name="Anderson I.J."/>
            <person name="Ivanova N.N."/>
            <person name="Hooper S.D."/>
            <person name="Lapidus A."/>
            <person name="Lucas S."/>
            <person name="Gonzalez B."/>
            <person name="Kyrpides N.C."/>
        </authorList>
    </citation>
    <scope>NUCLEOTIDE SEQUENCE [LARGE SCALE GENOMIC DNA]</scope>
    <source>
        <strain>JMP134 / LMG 1197</strain>
    </source>
</reference>
<comment type="function">
    <text evidence="1">Catalyzes the reversible interconversion of serine and glycine with tetrahydrofolate (THF) serving as the one-carbon carrier. This reaction serves as the major source of one-carbon groups required for the biosynthesis of purines, thymidylate, methionine, and other important biomolecules. Also exhibits THF-independent aldolase activity toward beta-hydroxyamino acids, producing glycine and aldehydes, via a retro-aldol mechanism.</text>
</comment>
<comment type="catalytic activity">
    <reaction evidence="1">
        <text>(6R)-5,10-methylene-5,6,7,8-tetrahydrofolate + glycine + H2O = (6S)-5,6,7,8-tetrahydrofolate + L-serine</text>
        <dbReference type="Rhea" id="RHEA:15481"/>
        <dbReference type="ChEBI" id="CHEBI:15377"/>
        <dbReference type="ChEBI" id="CHEBI:15636"/>
        <dbReference type="ChEBI" id="CHEBI:33384"/>
        <dbReference type="ChEBI" id="CHEBI:57305"/>
        <dbReference type="ChEBI" id="CHEBI:57453"/>
        <dbReference type="EC" id="2.1.2.1"/>
    </reaction>
</comment>
<comment type="cofactor">
    <cofactor evidence="1">
        <name>pyridoxal 5'-phosphate</name>
        <dbReference type="ChEBI" id="CHEBI:597326"/>
    </cofactor>
</comment>
<comment type="pathway">
    <text evidence="1">One-carbon metabolism; tetrahydrofolate interconversion.</text>
</comment>
<comment type="pathway">
    <text evidence="1">Amino-acid biosynthesis; glycine biosynthesis; glycine from L-serine: step 1/1.</text>
</comment>
<comment type="subunit">
    <text evidence="1">Homodimer.</text>
</comment>
<comment type="subcellular location">
    <subcellularLocation>
        <location evidence="1">Cytoplasm</location>
    </subcellularLocation>
</comment>
<comment type="similarity">
    <text evidence="1">Belongs to the SHMT family.</text>
</comment>
<evidence type="ECO:0000255" key="1">
    <source>
        <dbReference type="HAMAP-Rule" id="MF_00051"/>
    </source>
</evidence>
<dbReference type="EC" id="2.1.2.1" evidence="1"/>
<dbReference type="EMBL" id="CP000090">
    <property type="protein sequence ID" value="AAZ60170.1"/>
    <property type="molecule type" value="Genomic_DNA"/>
</dbReference>
<dbReference type="SMR" id="Q474L3"/>
<dbReference type="STRING" id="264198.Reut_A0790"/>
<dbReference type="KEGG" id="reu:Reut_A0790"/>
<dbReference type="eggNOG" id="COG0112">
    <property type="taxonomic scope" value="Bacteria"/>
</dbReference>
<dbReference type="HOGENOM" id="CLU_022477_2_1_4"/>
<dbReference type="OrthoDB" id="9803846at2"/>
<dbReference type="UniPathway" id="UPA00193"/>
<dbReference type="UniPathway" id="UPA00288">
    <property type="reaction ID" value="UER01023"/>
</dbReference>
<dbReference type="GO" id="GO:0005829">
    <property type="term" value="C:cytosol"/>
    <property type="evidence" value="ECO:0007669"/>
    <property type="project" value="TreeGrafter"/>
</dbReference>
<dbReference type="GO" id="GO:0004372">
    <property type="term" value="F:glycine hydroxymethyltransferase activity"/>
    <property type="evidence" value="ECO:0007669"/>
    <property type="project" value="UniProtKB-UniRule"/>
</dbReference>
<dbReference type="GO" id="GO:0030170">
    <property type="term" value="F:pyridoxal phosphate binding"/>
    <property type="evidence" value="ECO:0007669"/>
    <property type="project" value="UniProtKB-UniRule"/>
</dbReference>
<dbReference type="GO" id="GO:0019264">
    <property type="term" value="P:glycine biosynthetic process from serine"/>
    <property type="evidence" value="ECO:0007669"/>
    <property type="project" value="UniProtKB-UniRule"/>
</dbReference>
<dbReference type="GO" id="GO:0035999">
    <property type="term" value="P:tetrahydrofolate interconversion"/>
    <property type="evidence" value="ECO:0007669"/>
    <property type="project" value="UniProtKB-UniRule"/>
</dbReference>
<dbReference type="CDD" id="cd00378">
    <property type="entry name" value="SHMT"/>
    <property type="match status" value="1"/>
</dbReference>
<dbReference type="FunFam" id="3.40.640.10:FF:000001">
    <property type="entry name" value="Serine hydroxymethyltransferase"/>
    <property type="match status" value="1"/>
</dbReference>
<dbReference type="FunFam" id="3.90.1150.10:FF:000003">
    <property type="entry name" value="Serine hydroxymethyltransferase"/>
    <property type="match status" value="1"/>
</dbReference>
<dbReference type="Gene3D" id="3.90.1150.10">
    <property type="entry name" value="Aspartate Aminotransferase, domain 1"/>
    <property type="match status" value="1"/>
</dbReference>
<dbReference type="Gene3D" id="3.40.640.10">
    <property type="entry name" value="Type I PLP-dependent aspartate aminotransferase-like (Major domain)"/>
    <property type="match status" value="1"/>
</dbReference>
<dbReference type="HAMAP" id="MF_00051">
    <property type="entry name" value="SHMT"/>
    <property type="match status" value="1"/>
</dbReference>
<dbReference type="InterPro" id="IPR015424">
    <property type="entry name" value="PyrdxlP-dep_Trfase"/>
</dbReference>
<dbReference type="InterPro" id="IPR015421">
    <property type="entry name" value="PyrdxlP-dep_Trfase_major"/>
</dbReference>
<dbReference type="InterPro" id="IPR015422">
    <property type="entry name" value="PyrdxlP-dep_Trfase_small"/>
</dbReference>
<dbReference type="InterPro" id="IPR001085">
    <property type="entry name" value="Ser_HO-MeTrfase"/>
</dbReference>
<dbReference type="InterPro" id="IPR049943">
    <property type="entry name" value="Ser_HO-MeTrfase-like"/>
</dbReference>
<dbReference type="InterPro" id="IPR019798">
    <property type="entry name" value="Ser_HO-MeTrfase_PLP_BS"/>
</dbReference>
<dbReference type="InterPro" id="IPR039429">
    <property type="entry name" value="SHMT-like_dom"/>
</dbReference>
<dbReference type="NCBIfam" id="NF000586">
    <property type="entry name" value="PRK00011.1"/>
    <property type="match status" value="1"/>
</dbReference>
<dbReference type="PANTHER" id="PTHR11680">
    <property type="entry name" value="SERINE HYDROXYMETHYLTRANSFERASE"/>
    <property type="match status" value="1"/>
</dbReference>
<dbReference type="PANTHER" id="PTHR11680:SF50">
    <property type="entry name" value="SERINE HYDROXYMETHYLTRANSFERASE"/>
    <property type="match status" value="1"/>
</dbReference>
<dbReference type="Pfam" id="PF00464">
    <property type="entry name" value="SHMT"/>
    <property type="match status" value="1"/>
</dbReference>
<dbReference type="PIRSF" id="PIRSF000412">
    <property type="entry name" value="SHMT"/>
    <property type="match status" value="1"/>
</dbReference>
<dbReference type="SUPFAM" id="SSF53383">
    <property type="entry name" value="PLP-dependent transferases"/>
    <property type="match status" value="1"/>
</dbReference>
<dbReference type="PROSITE" id="PS00096">
    <property type="entry name" value="SHMT"/>
    <property type="match status" value="1"/>
</dbReference>
<keyword id="KW-0028">Amino-acid biosynthesis</keyword>
<keyword id="KW-0963">Cytoplasm</keyword>
<keyword id="KW-0554">One-carbon metabolism</keyword>
<keyword id="KW-0663">Pyridoxal phosphate</keyword>
<keyword id="KW-0808">Transferase</keyword>
<sequence length="415" mass="45087">MFERSRYTIDQIDPEVFAAIQKENQRQEDHIELIASENYTSPAVMAAQGSQLTNKYAEGYPGKRYYGGCEYVDIVEQLAIDRVKQLFGAEAANVQPNSGSQANQGVYFAVLKPGDTIMGMSLAEGGHLTHGMALNMSGKWFNVVSYGLNAQEDIDYDALEKLAQEKKPKLIIAGASAFALRIDFERIGKVAKSIGAYFMVDMAHYAGLIAAGVYPNPVPHADFVTTTTHKSLRGPRGGVILMKAEHEKAINSSIFPGIQGGPLMHVIAGKAVAFKEALTPEFKAYQEQVVKNAAVLAETLIARGLRIVSGRTESHVMLVDLRAKNITGKEAERILGEAHLTVNKNAIPNDPEKPFVTSGIRVGSPAMTTRGFKEEEARIVGNLIADVLDNPHDAGNIASVREQVSALTKRFPVYG</sequence>
<feature type="chain" id="PRO_0000235012" description="Serine hydroxymethyltransferase 1">
    <location>
        <begin position="1"/>
        <end position="415"/>
    </location>
</feature>
<feature type="binding site" evidence="1">
    <location>
        <position position="122"/>
    </location>
    <ligand>
        <name>(6S)-5,6,7,8-tetrahydrofolate</name>
        <dbReference type="ChEBI" id="CHEBI:57453"/>
    </ligand>
</feature>
<feature type="binding site" evidence="1">
    <location>
        <begin position="126"/>
        <end position="128"/>
    </location>
    <ligand>
        <name>(6S)-5,6,7,8-tetrahydrofolate</name>
        <dbReference type="ChEBI" id="CHEBI:57453"/>
    </ligand>
</feature>
<feature type="site" description="Plays an important role in substrate specificity" evidence="1">
    <location>
        <position position="229"/>
    </location>
</feature>
<feature type="modified residue" description="N6-(pyridoxal phosphate)lysine" evidence="1">
    <location>
        <position position="230"/>
    </location>
</feature>
<gene>
    <name evidence="1" type="primary">glyA1</name>
    <name type="ordered locus">Reut_A0790</name>
</gene>